<accession>Q3B0M2</accession>
<dbReference type="EMBL" id="CP000097">
    <property type="protein sequence ID" value="ABB25106.1"/>
    <property type="molecule type" value="Genomic_DNA"/>
</dbReference>
<dbReference type="RefSeq" id="WP_011358973.1">
    <property type="nucleotide sequence ID" value="NC_007513.1"/>
</dbReference>
<dbReference type="SMR" id="Q3B0M2"/>
<dbReference type="STRING" id="316279.Syncc9902_0131"/>
<dbReference type="KEGG" id="sye:Syncc9902_0131"/>
<dbReference type="eggNOG" id="COG0290">
    <property type="taxonomic scope" value="Bacteria"/>
</dbReference>
<dbReference type="HOGENOM" id="CLU_054919_3_1_3"/>
<dbReference type="OrthoDB" id="9806014at2"/>
<dbReference type="Proteomes" id="UP000002712">
    <property type="component" value="Chromosome"/>
</dbReference>
<dbReference type="GO" id="GO:0005829">
    <property type="term" value="C:cytosol"/>
    <property type="evidence" value="ECO:0007669"/>
    <property type="project" value="TreeGrafter"/>
</dbReference>
<dbReference type="GO" id="GO:0016020">
    <property type="term" value="C:membrane"/>
    <property type="evidence" value="ECO:0007669"/>
    <property type="project" value="TreeGrafter"/>
</dbReference>
<dbReference type="GO" id="GO:0043022">
    <property type="term" value="F:ribosome binding"/>
    <property type="evidence" value="ECO:0007669"/>
    <property type="project" value="TreeGrafter"/>
</dbReference>
<dbReference type="GO" id="GO:0003743">
    <property type="term" value="F:translation initiation factor activity"/>
    <property type="evidence" value="ECO:0007669"/>
    <property type="project" value="UniProtKB-UniRule"/>
</dbReference>
<dbReference type="GO" id="GO:0032790">
    <property type="term" value="P:ribosome disassembly"/>
    <property type="evidence" value="ECO:0007669"/>
    <property type="project" value="TreeGrafter"/>
</dbReference>
<dbReference type="FunFam" id="3.10.20.80:FF:000001">
    <property type="entry name" value="Translation initiation factor IF-3"/>
    <property type="match status" value="1"/>
</dbReference>
<dbReference type="FunFam" id="3.30.110.10:FF:000001">
    <property type="entry name" value="Translation initiation factor IF-3"/>
    <property type="match status" value="1"/>
</dbReference>
<dbReference type="Gene3D" id="3.30.110.10">
    <property type="entry name" value="Translation initiation factor 3 (IF-3), C-terminal domain"/>
    <property type="match status" value="1"/>
</dbReference>
<dbReference type="Gene3D" id="3.10.20.80">
    <property type="entry name" value="Translation initiation factor 3 (IF-3), N-terminal domain"/>
    <property type="match status" value="1"/>
</dbReference>
<dbReference type="HAMAP" id="MF_00080">
    <property type="entry name" value="IF_3"/>
    <property type="match status" value="1"/>
</dbReference>
<dbReference type="InterPro" id="IPR036788">
    <property type="entry name" value="T_IF-3_C_sf"/>
</dbReference>
<dbReference type="InterPro" id="IPR036787">
    <property type="entry name" value="T_IF-3_N_sf"/>
</dbReference>
<dbReference type="InterPro" id="IPR019813">
    <property type="entry name" value="Translation_initiation_fac3_CS"/>
</dbReference>
<dbReference type="InterPro" id="IPR001288">
    <property type="entry name" value="Translation_initiation_fac_3"/>
</dbReference>
<dbReference type="InterPro" id="IPR019815">
    <property type="entry name" value="Translation_initiation_fac_3_C"/>
</dbReference>
<dbReference type="InterPro" id="IPR019814">
    <property type="entry name" value="Translation_initiation_fac_3_N"/>
</dbReference>
<dbReference type="NCBIfam" id="TIGR00168">
    <property type="entry name" value="infC"/>
    <property type="match status" value="1"/>
</dbReference>
<dbReference type="PANTHER" id="PTHR10938">
    <property type="entry name" value="TRANSLATION INITIATION FACTOR IF-3"/>
    <property type="match status" value="1"/>
</dbReference>
<dbReference type="PANTHER" id="PTHR10938:SF0">
    <property type="entry name" value="TRANSLATION INITIATION FACTOR IF-3, MITOCHONDRIAL"/>
    <property type="match status" value="1"/>
</dbReference>
<dbReference type="Pfam" id="PF00707">
    <property type="entry name" value="IF3_C"/>
    <property type="match status" value="1"/>
</dbReference>
<dbReference type="Pfam" id="PF05198">
    <property type="entry name" value="IF3_N"/>
    <property type="match status" value="1"/>
</dbReference>
<dbReference type="SUPFAM" id="SSF55200">
    <property type="entry name" value="Translation initiation factor IF3, C-terminal domain"/>
    <property type="match status" value="1"/>
</dbReference>
<dbReference type="SUPFAM" id="SSF54364">
    <property type="entry name" value="Translation initiation factor IF3, N-terminal domain"/>
    <property type="match status" value="1"/>
</dbReference>
<dbReference type="PROSITE" id="PS00938">
    <property type="entry name" value="IF3"/>
    <property type="match status" value="1"/>
</dbReference>
<proteinExistence type="inferred from homology"/>
<protein>
    <recommendedName>
        <fullName evidence="1">Translation initiation factor IF-3</fullName>
    </recommendedName>
</protein>
<keyword id="KW-0963">Cytoplasm</keyword>
<keyword id="KW-0396">Initiation factor</keyword>
<keyword id="KW-0648">Protein biosynthesis</keyword>
<keyword id="KW-1185">Reference proteome</keyword>
<reference key="1">
    <citation type="submission" date="2005-08" db="EMBL/GenBank/DDBJ databases">
        <title>Complete sequence of Synechococcus sp. CC9902.</title>
        <authorList>
            <person name="Copeland A."/>
            <person name="Lucas S."/>
            <person name="Lapidus A."/>
            <person name="Barry K."/>
            <person name="Detter J.C."/>
            <person name="Glavina T."/>
            <person name="Hammon N."/>
            <person name="Israni S."/>
            <person name="Pitluck S."/>
            <person name="Martinez M."/>
            <person name="Schmutz J."/>
            <person name="Larimer F."/>
            <person name="Land M."/>
            <person name="Kyrpides N."/>
            <person name="Ivanova N."/>
            <person name="Richardson P."/>
        </authorList>
    </citation>
    <scope>NUCLEOTIDE SEQUENCE [LARGE SCALE GENOMIC DNA]</scope>
    <source>
        <strain>CC9902</strain>
    </source>
</reference>
<name>IF3_SYNS9</name>
<gene>
    <name evidence="1" type="primary">infC</name>
    <name type="ordered locus">Syncc9902_0131</name>
</gene>
<sequence>MAPRPRFDRRAPVRELPNINDRISYPQLRVVDSDGSQLGVISREEALEVSKERELDLVLVSEKADPPVCRIMDYGKFKFEQEKKAKEAKKKSHQTEVKEVKMRYKIDSHDYDVRIGQAQRFLKAGDKVKCTVIFRGREIQHTALAEVLLRRMAKDLEEKAEIQQSPKREGRNMIMFLTPRKTPLLKKDDKDSSVHQAIRTIPAPPRSTAAKVAAPQA</sequence>
<organism>
    <name type="scientific">Synechococcus sp. (strain CC9902)</name>
    <dbReference type="NCBI Taxonomy" id="316279"/>
    <lineage>
        <taxon>Bacteria</taxon>
        <taxon>Bacillati</taxon>
        <taxon>Cyanobacteriota</taxon>
        <taxon>Cyanophyceae</taxon>
        <taxon>Synechococcales</taxon>
        <taxon>Synechococcaceae</taxon>
        <taxon>Synechococcus</taxon>
    </lineage>
</organism>
<feature type="chain" id="PRO_1000004584" description="Translation initiation factor IF-3">
    <location>
        <begin position="1"/>
        <end position="217"/>
    </location>
</feature>
<comment type="function">
    <text evidence="1">IF-3 binds to the 30S ribosomal subunit and shifts the equilibrium between 70S ribosomes and their 50S and 30S subunits in favor of the free subunits, thus enhancing the availability of 30S subunits on which protein synthesis initiation begins.</text>
</comment>
<comment type="subunit">
    <text evidence="1">Monomer.</text>
</comment>
<comment type="subcellular location">
    <subcellularLocation>
        <location evidence="1">Cytoplasm</location>
    </subcellularLocation>
</comment>
<comment type="similarity">
    <text evidence="1">Belongs to the IF-3 family.</text>
</comment>
<evidence type="ECO:0000255" key="1">
    <source>
        <dbReference type="HAMAP-Rule" id="MF_00080"/>
    </source>
</evidence>